<sequence>MAKKKAFIPFFYFTSIVFLPWVISLCCNKSLKIWITNWWNTRQCETFLNDIKEKSVLEKFIQLENLFQLDEMIKEYPETDLQQFRLGIHKETIQFIKIHNEYHIHTILHFSTNLISFVILSGYSFWGKEKLFILNSWVQEFLYNLSDTIKAFSILLLTDLCIGFHSPHGWELMIGYIYKDFGFAHYEQILSGLVSTFPVILDTIFKYWIFRYLNRVSPSLVVIYHAIND</sequence>
<organism>
    <name type="scientific">Draba nemorosa</name>
    <name type="common">Woodland whitlowgrass</name>
    <dbReference type="NCBI Taxonomy" id="171822"/>
    <lineage>
        <taxon>Eukaryota</taxon>
        <taxon>Viridiplantae</taxon>
        <taxon>Streptophyta</taxon>
        <taxon>Embryophyta</taxon>
        <taxon>Tracheophyta</taxon>
        <taxon>Spermatophyta</taxon>
        <taxon>Magnoliopsida</taxon>
        <taxon>eudicotyledons</taxon>
        <taxon>Gunneridae</taxon>
        <taxon>Pentapetalae</taxon>
        <taxon>rosids</taxon>
        <taxon>malvids</taxon>
        <taxon>Brassicales</taxon>
        <taxon>Brassicaceae</taxon>
        <taxon>Arabideae</taxon>
        <taxon>Draba</taxon>
    </lineage>
</organism>
<geneLocation type="chloroplast"/>
<protein>
    <recommendedName>
        <fullName evidence="1">Potassium/proton antiporter CemA</fullName>
    </recommendedName>
    <alternativeName>
        <fullName evidence="1">Chloroplast envelope membrane protein A</fullName>
        <shortName evidence="1">CemA</shortName>
    </alternativeName>
</protein>
<reference key="1">
    <citation type="submission" date="2007-03" db="EMBL/GenBank/DDBJ databases">
        <title>Sequencing analysis of Draba nemoroza chloroplast DNA.</title>
        <authorList>
            <person name="Hosouchi T."/>
            <person name="Tsuruoka H."/>
            <person name="Kotani H."/>
        </authorList>
    </citation>
    <scope>NUCLEOTIDE SEQUENCE [LARGE SCALE GENOMIC DNA]</scope>
</reference>
<feature type="chain" id="PRO_0000293516" description="Potassium/proton antiporter CemA">
    <location>
        <begin position="1"/>
        <end position="229"/>
    </location>
</feature>
<feature type="transmembrane region" description="Helical" evidence="1">
    <location>
        <begin position="6"/>
        <end position="26"/>
    </location>
</feature>
<feature type="transmembrane region" description="Helical" evidence="1">
    <location>
        <begin position="107"/>
        <end position="127"/>
    </location>
</feature>
<feature type="transmembrane region" description="Helical" evidence="1">
    <location>
        <begin position="189"/>
        <end position="209"/>
    </location>
</feature>
<dbReference type="EMBL" id="AP009373">
    <property type="protein sequence ID" value="BAF50386.1"/>
    <property type="molecule type" value="Genomic_DNA"/>
</dbReference>
<dbReference type="RefSeq" id="YP_001123562.1">
    <property type="nucleotide sequence ID" value="NC_009272.1"/>
</dbReference>
<dbReference type="SMR" id="A4QL31"/>
<dbReference type="GeneID" id="4964704"/>
<dbReference type="GO" id="GO:0009706">
    <property type="term" value="C:chloroplast inner membrane"/>
    <property type="evidence" value="ECO:0007669"/>
    <property type="project" value="UniProtKB-SubCell"/>
</dbReference>
<dbReference type="GO" id="GO:0015297">
    <property type="term" value="F:antiporter activity"/>
    <property type="evidence" value="ECO:0007669"/>
    <property type="project" value="UniProtKB-KW"/>
</dbReference>
<dbReference type="GO" id="GO:0015078">
    <property type="term" value="F:proton transmembrane transporter activity"/>
    <property type="evidence" value="ECO:0007669"/>
    <property type="project" value="UniProtKB-UniRule"/>
</dbReference>
<dbReference type="GO" id="GO:0006813">
    <property type="term" value="P:potassium ion transport"/>
    <property type="evidence" value="ECO:0007669"/>
    <property type="project" value="UniProtKB-UniRule"/>
</dbReference>
<dbReference type="HAMAP" id="MF_01308">
    <property type="entry name" value="CemA_PxcA"/>
    <property type="match status" value="1"/>
</dbReference>
<dbReference type="InterPro" id="IPR004282">
    <property type="entry name" value="CemA"/>
</dbReference>
<dbReference type="PANTHER" id="PTHR33650:SF2">
    <property type="entry name" value="CHLOROPLAST ENVELOPE MEMBRANE PROTEIN"/>
    <property type="match status" value="1"/>
</dbReference>
<dbReference type="PANTHER" id="PTHR33650">
    <property type="entry name" value="CHLOROPLAST ENVELOPE MEMBRANE PROTEIN-RELATED"/>
    <property type="match status" value="1"/>
</dbReference>
<dbReference type="Pfam" id="PF03040">
    <property type="entry name" value="CemA"/>
    <property type="match status" value="1"/>
</dbReference>
<accession>A4QL31</accession>
<gene>
    <name evidence="1" type="primary">cemA</name>
    <name type="synonym">ycf10</name>
</gene>
<comment type="function">
    <text evidence="1">Contributes to K(+)/H(+) antiport activity by supporting proton efflux to control proton extrusion and homeostasis in chloroplasts in a light-dependent manner to modulate photosynthesis. Prevents excessive induction of non-photochemical quenching (NPQ) under continuous-light conditions. Indirectly promotes efficient inorganic carbon uptake into chloroplasts.</text>
</comment>
<comment type="catalytic activity">
    <reaction evidence="1">
        <text>K(+)(in) + H(+)(out) = K(+)(out) + H(+)(in)</text>
        <dbReference type="Rhea" id="RHEA:29467"/>
        <dbReference type="ChEBI" id="CHEBI:15378"/>
        <dbReference type="ChEBI" id="CHEBI:29103"/>
    </reaction>
</comment>
<comment type="subcellular location">
    <subcellularLocation>
        <location evidence="1">Plastid</location>
        <location evidence="1">Chloroplast inner membrane</location>
        <topology evidence="1">Multi-pass membrane protein</topology>
    </subcellularLocation>
</comment>
<comment type="similarity">
    <text evidence="1 2">Belongs to the CemA family.</text>
</comment>
<proteinExistence type="inferred from homology"/>
<evidence type="ECO:0000255" key="1">
    <source>
        <dbReference type="HAMAP-Rule" id="MF_01308"/>
    </source>
</evidence>
<evidence type="ECO:0000305" key="2"/>
<keyword id="KW-0050">Antiport</keyword>
<keyword id="KW-0150">Chloroplast</keyword>
<keyword id="KW-0375">Hydrogen ion transport</keyword>
<keyword id="KW-0406">Ion transport</keyword>
<keyword id="KW-0472">Membrane</keyword>
<keyword id="KW-0934">Plastid</keyword>
<keyword id="KW-1001">Plastid inner membrane</keyword>
<keyword id="KW-0630">Potassium</keyword>
<keyword id="KW-0633">Potassium transport</keyword>
<keyword id="KW-0812">Transmembrane</keyword>
<keyword id="KW-1133">Transmembrane helix</keyword>
<keyword id="KW-0813">Transport</keyword>
<name>CEMA_DRANE</name>